<dbReference type="EMBL" id="AAFI02000047">
    <property type="protein sequence ID" value="EAL66003.1"/>
    <property type="molecule type" value="Genomic_DNA"/>
</dbReference>
<dbReference type="RefSeq" id="XP_639358.1">
    <property type="nucleotide sequence ID" value="XM_634266.1"/>
</dbReference>
<dbReference type="SMR" id="Q54RX9"/>
<dbReference type="FunCoup" id="Q54RX9">
    <property type="interactions" value="2"/>
</dbReference>
<dbReference type="STRING" id="44689.Q54RX9"/>
<dbReference type="PaxDb" id="44689-DDB0229394"/>
<dbReference type="EnsemblProtists" id="EAL66003">
    <property type="protein sequence ID" value="EAL66003"/>
    <property type="gene ID" value="DDB_G0282847"/>
</dbReference>
<dbReference type="GeneID" id="8623798"/>
<dbReference type="KEGG" id="ddi:DDB_G0282847"/>
<dbReference type="dictyBase" id="DDB_G0282847">
    <property type="gene designation" value="rab5B"/>
</dbReference>
<dbReference type="VEuPathDB" id="AmoebaDB:DDB_G0282847"/>
<dbReference type="eggNOG" id="KOG0092">
    <property type="taxonomic scope" value="Eukaryota"/>
</dbReference>
<dbReference type="HOGENOM" id="CLU_041217_10_2_1"/>
<dbReference type="InParanoid" id="Q54RX9"/>
<dbReference type="OMA" id="KFDKGFK"/>
<dbReference type="PhylomeDB" id="Q54RX9"/>
<dbReference type="Proteomes" id="UP000002195">
    <property type="component" value="Chromosome 3"/>
</dbReference>
<dbReference type="GO" id="GO:0005769">
    <property type="term" value="C:early endosome"/>
    <property type="evidence" value="ECO:0000318"/>
    <property type="project" value="GO_Central"/>
</dbReference>
<dbReference type="GO" id="GO:0030139">
    <property type="term" value="C:endocytic vesicle"/>
    <property type="evidence" value="ECO:0000318"/>
    <property type="project" value="GO_Central"/>
</dbReference>
<dbReference type="GO" id="GO:0012505">
    <property type="term" value="C:endomembrane system"/>
    <property type="evidence" value="ECO:0000318"/>
    <property type="project" value="GO_Central"/>
</dbReference>
<dbReference type="GO" id="GO:0005811">
    <property type="term" value="C:lipid droplet"/>
    <property type="evidence" value="ECO:0007005"/>
    <property type="project" value="dictyBase"/>
</dbReference>
<dbReference type="GO" id="GO:0140220">
    <property type="term" value="C:pathogen-containing vacuole"/>
    <property type="evidence" value="ECO:0007005"/>
    <property type="project" value="dictyBase"/>
</dbReference>
<dbReference type="GO" id="GO:0005886">
    <property type="term" value="C:plasma membrane"/>
    <property type="evidence" value="ECO:0000318"/>
    <property type="project" value="GO_Central"/>
</dbReference>
<dbReference type="GO" id="GO:0005525">
    <property type="term" value="F:GTP binding"/>
    <property type="evidence" value="ECO:0007669"/>
    <property type="project" value="UniProtKB-KW"/>
</dbReference>
<dbReference type="GO" id="GO:0003924">
    <property type="term" value="F:GTPase activity"/>
    <property type="evidence" value="ECO:0000318"/>
    <property type="project" value="GO_Central"/>
</dbReference>
<dbReference type="GO" id="GO:0006971">
    <property type="term" value="P:hypotonic response"/>
    <property type="evidence" value="ECO:0007007"/>
    <property type="project" value="dictyBase"/>
</dbReference>
<dbReference type="GO" id="GO:0006886">
    <property type="term" value="P:intracellular protein transport"/>
    <property type="evidence" value="ECO:0000318"/>
    <property type="project" value="GO_Central"/>
</dbReference>
<dbReference type="CDD" id="cd01860">
    <property type="entry name" value="Rab5_related"/>
    <property type="match status" value="1"/>
</dbReference>
<dbReference type="FunFam" id="3.40.50.300:FF:002284">
    <property type="entry name" value="Rab family GTPase"/>
    <property type="match status" value="1"/>
</dbReference>
<dbReference type="Gene3D" id="3.40.50.300">
    <property type="entry name" value="P-loop containing nucleotide triphosphate hydrolases"/>
    <property type="match status" value="1"/>
</dbReference>
<dbReference type="InterPro" id="IPR027417">
    <property type="entry name" value="P-loop_NTPase"/>
</dbReference>
<dbReference type="InterPro" id="IPR005225">
    <property type="entry name" value="Small_GTP-bd"/>
</dbReference>
<dbReference type="InterPro" id="IPR001806">
    <property type="entry name" value="Small_GTPase"/>
</dbReference>
<dbReference type="NCBIfam" id="TIGR00231">
    <property type="entry name" value="small_GTP"/>
    <property type="match status" value="1"/>
</dbReference>
<dbReference type="PANTHER" id="PTHR47978">
    <property type="match status" value="1"/>
</dbReference>
<dbReference type="Pfam" id="PF00071">
    <property type="entry name" value="Ras"/>
    <property type="match status" value="1"/>
</dbReference>
<dbReference type="PRINTS" id="PR00449">
    <property type="entry name" value="RASTRNSFRMNG"/>
</dbReference>
<dbReference type="SMART" id="SM00177">
    <property type="entry name" value="ARF"/>
    <property type="match status" value="1"/>
</dbReference>
<dbReference type="SMART" id="SM00175">
    <property type="entry name" value="RAB"/>
    <property type="match status" value="1"/>
</dbReference>
<dbReference type="SMART" id="SM00173">
    <property type="entry name" value="RAS"/>
    <property type="match status" value="1"/>
</dbReference>
<dbReference type="SMART" id="SM00174">
    <property type="entry name" value="RHO"/>
    <property type="match status" value="1"/>
</dbReference>
<dbReference type="SUPFAM" id="SSF52540">
    <property type="entry name" value="P-loop containing nucleoside triphosphate hydrolases"/>
    <property type="match status" value="1"/>
</dbReference>
<dbReference type="PROSITE" id="PS51419">
    <property type="entry name" value="RAB"/>
    <property type="match status" value="1"/>
</dbReference>
<sequence>MSNANNNGQATAKGGCCGGGGSQDNKANQNSGIVVSNTSTDNRNKFDKGFKLVLLGEMNTGKTCISSRLVRNEFGPTDSTIGAAFLVKSMVVDNINIKLEIWDTAGQERYRSLTPMYYRGAAAAVVVYDITKKNTFETLKRWVSELQKHASPNLILALAGNKVDLPNREVQVDEVNRYISELGNAIFFETSAASGQNINELFTEICRRLIENYK</sequence>
<proteinExistence type="uncertain"/>
<reference key="1">
    <citation type="journal article" date="2005" name="Nature">
        <title>The genome of the social amoeba Dictyostelium discoideum.</title>
        <authorList>
            <person name="Eichinger L."/>
            <person name="Pachebat J.A."/>
            <person name="Gloeckner G."/>
            <person name="Rajandream M.A."/>
            <person name="Sucgang R."/>
            <person name="Berriman M."/>
            <person name="Song J."/>
            <person name="Olsen R."/>
            <person name="Szafranski K."/>
            <person name="Xu Q."/>
            <person name="Tunggal B."/>
            <person name="Kummerfeld S."/>
            <person name="Madera M."/>
            <person name="Konfortov B.A."/>
            <person name="Rivero F."/>
            <person name="Bankier A.T."/>
            <person name="Lehmann R."/>
            <person name="Hamlin N."/>
            <person name="Davies R."/>
            <person name="Gaudet P."/>
            <person name="Fey P."/>
            <person name="Pilcher K."/>
            <person name="Chen G."/>
            <person name="Saunders D."/>
            <person name="Sodergren E.J."/>
            <person name="Davis P."/>
            <person name="Kerhornou A."/>
            <person name="Nie X."/>
            <person name="Hall N."/>
            <person name="Anjard C."/>
            <person name="Hemphill L."/>
            <person name="Bason N."/>
            <person name="Farbrother P."/>
            <person name="Desany B."/>
            <person name="Just E."/>
            <person name="Morio T."/>
            <person name="Rost R."/>
            <person name="Churcher C.M."/>
            <person name="Cooper J."/>
            <person name="Haydock S."/>
            <person name="van Driessche N."/>
            <person name="Cronin A."/>
            <person name="Goodhead I."/>
            <person name="Muzny D.M."/>
            <person name="Mourier T."/>
            <person name="Pain A."/>
            <person name="Lu M."/>
            <person name="Harper D."/>
            <person name="Lindsay R."/>
            <person name="Hauser H."/>
            <person name="James K.D."/>
            <person name="Quiles M."/>
            <person name="Madan Babu M."/>
            <person name="Saito T."/>
            <person name="Buchrieser C."/>
            <person name="Wardroper A."/>
            <person name="Felder M."/>
            <person name="Thangavelu M."/>
            <person name="Johnson D."/>
            <person name="Knights A."/>
            <person name="Loulseged H."/>
            <person name="Mungall K.L."/>
            <person name="Oliver K."/>
            <person name="Price C."/>
            <person name="Quail M.A."/>
            <person name="Urushihara H."/>
            <person name="Hernandez J."/>
            <person name="Rabbinowitsch E."/>
            <person name="Steffen D."/>
            <person name="Sanders M."/>
            <person name="Ma J."/>
            <person name="Kohara Y."/>
            <person name="Sharp S."/>
            <person name="Simmonds M.N."/>
            <person name="Spiegler S."/>
            <person name="Tivey A."/>
            <person name="Sugano S."/>
            <person name="White B."/>
            <person name="Walker D."/>
            <person name="Woodward J.R."/>
            <person name="Winckler T."/>
            <person name="Tanaka Y."/>
            <person name="Shaulsky G."/>
            <person name="Schleicher M."/>
            <person name="Weinstock G.M."/>
            <person name="Rosenthal A."/>
            <person name="Cox E.C."/>
            <person name="Chisholm R.L."/>
            <person name="Gibbs R.A."/>
            <person name="Loomis W.F."/>
            <person name="Platzer M."/>
            <person name="Kay R.R."/>
            <person name="Williams J.G."/>
            <person name="Dear P.H."/>
            <person name="Noegel A.A."/>
            <person name="Barrell B.G."/>
            <person name="Kuspa A."/>
        </authorList>
    </citation>
    <scope>NUCLEOTIDE SEQUENCE [LARGE SCALE GENOMIC DNA]</scope>
    <source>
        <strain>AX4</strain>
    </source>
</reference>
<evidence type="ECO:0000250" key="1"/>
<evidence type="ECO:0000255" key="2"/>
<evidence type="ECO:0000305" key="3"/>
<accession>Q54RX9</accession>
<name>RAB5B_DICDI</name>
<protein>
    <recommendedName>
        <fullName>Putative ras-related protein Rab-5B</fullName>
    </recommendedName>
</protein>
<gene>
    <name type="primary">rab5B</name>
    <name type="ORF">DDB_G0282847</name>
</gene>
<feature type="chain" id="PRO_0000330645" description="Putative ras-related protein Rab-5B">
    <location>
        <begin position="1"/>
        <end position="214"/>
    </location>
</feature>
<feature type="short sequence motif" description="Effector region" evidence="2">
    <location>
        <begin position="77"/>
        <end position="85"/>
    </location>
</feature>
<feature type="binding site" evidence="1">
    <location>
        <begin position="56"/>
        <end position="63"/>
    </location>
    <ligand>
        <name>GTP</name>
        <dbReference type="ChEBI" id="CHEBI:37565"/>
    </ligand>
</feature>
<feature type="binding site" evidence="1">
    <location>
        <begin position="103"/>
        <end position="107"/>
    </location>
    <ligand>
        <name>GTP</name>
        <dbReference type="ChEBI" id="CHEBI:37565"/>
    </ligand>
</feature>
<feature type="binding site" evidence="1">
    <location>
        <begin position="161"/>
        <end position="164"/>
    </location>
    <ligand>
        <name>GTP</name>
        <dbReference type="ChEBI" id="CHEBI:37565"/>
    </ligand>
</feature>
<organism>
    <name type="scientific">Dictyostelium discoideum</name>
    <name type="common">Social amoeba</name>
    <dbReference type="NCBI Taxonomy" id="44689"/>
    <lineage>
        <taxon>Eukaryota</taxon>
        <taxon>Amoebozoa</taxon>
        <taxon>Evosea</taxon>
        <taxon>Eumycetozoa</taxon>
        <taxon>Dictyostelia</taxon>
        <taxon>Dictyosteliales</taxon>
        <taxon>Dictyosteliaceae</taxon>
        <taxon>Dictyostelium</taxon>
    </lineage>
</organism>
<keyword id="KW-0342">GTP-binding</keyword>
<keyword id="KW-0547">Nucleotide-binding</keyword>
<keyword id="KW-1185">Reference proteome</keyword>
<comment type="PTM">
    <text>This sequence lacks the C-terminal cysteine motifs subject to isoprenylation in other Rab proteins.</text>
</comment>
<comment type="similarity">
    <text evidence="3">Belongs to the small GTPase superfamily. Rab family.</text>
</comment>
<comment type="caution">
    <text evidence="3">Could be the product of a pseudogene.</text>
</comment>